<gene>
    <name type="ordered locus">MIMI_L165</name>
</gene>
<keyword id="KW-1185">Reference proteome</keyword>
<sequence>MENICELFDDVILEIMNLLSDTDKINFMFCCSRFYYFIDLVYYNDIYDYYKIQNVSFINKFKKIRYLAVTDTIPSVITHLELDKSFVGSLENCQLPKLSCLKLTQLQYDSFKIYISPAVKIDILKLPTYLKYIDLDYSWDIETYSNSNNVIVKRLRTDFICPVENREGPKCGLMKTSCISTNYYSANYYQYINSQQTQLVTGKHHVPNIQTNKSVKQPIKYSSNTKSTINNIFTNILNNIPKNIPKYTPNNIPKIVPKNTHYRNSSKKYRY</sequence>
<dbReference type="EMBL" id="AY653733">
    <property type="protein sequence ID" value="AAV50439.1"/>
    <property type="molecule type" value="Genomic_DNA"/>
</dbReference>
<dbReference type="KEGG" id="vg:9924765"/>
<dbReference type="Proteomes" id="UP000001134">
    <property type="component" value="Genome"/>
</dbReference>
<dbReference type="InterPro" id="IPR001810">
    <property type="entry name" value="F-box_dom"/>
</dbReference>
<dbReference type="Pfam" id="PF00646">
    <property type="entry name" value="F-box"/>
    <property type="match status" value="1"/>
</dbReference>
<reference key="1">
    <citation type="journal article" date="2004" name="Science">
        <title>The 1.2-megabase genome sequence of Mimivirus.</title>
        <authorList>
            <person name="Raoult D."/>
            <person name="Audic S."/>
            <person name="Robert C."/>
            <person name="Abergel C."/>
            <person name="Renesto P."/>
            <person name="Ogata H."/>
            <person name="La Scola B."/>
            <person name="Susan M."/>
            <person name="Claverie J.-M."/>
        </authorList>
    </citation>
    <scope>NUCLEOTIDE SEQUENCE [LARGE SCALE GENOMIC DNA]</scope>
    <source>
        <strain>Rowbotham-Bradford</strain>
    </source>
</reference>
<evidence type="ECO:0000256" key="1">
    <source>
        <dbReference type="SAM" id="MobiDB-lite"/>
    </source>
</evidence>
<proteinExistence type="predicted"/>
<name>YL165_MIMIV</name>
<organism>
    <name type="scientific">Acanthamoeba polyphaga mimivirus</name>
    <name type="common">APMV</name>
    <dbReference type="NCBI Taxonomy" id="212035"/>
    <lineage>
        <taxon>Viruses</taxon>
        <taxon>Varidnaviria</taxon>
        <taxon>Bamfordvirae</taxon>
        <taxon>Nucleocytoviricota</taxon>
        <taxon>Megaviricetes</taxon>
        <taxon>Imitervirales</taxon>
        <taxon>Mimiviridae</taxon>
        <taxon>Megamimivirinae</taxon>
        <taxon>Mimivirus</taxon>
        <taxon>Mimivirus bradfordmassiliense</taxon>
    </lineage>
</organism>
<accession>Q5UP35</accession>
<feature type="chain" id="PRO_0000119986" description="Putative F-box protein L165">
    <location>
        <begin position="1"/>
        <end position="271"/>
    </location>
</feature>
<feature type="domain" description="F-box">
    <location>
        <begin position="4"/>
        <end position="49"/>
    </location>
</feature>
<feature type="region of interest" description="Disordered" evidence="1">
    <location>
        <begin position="251"/>
        <end position="271"/>
    </location>
</feature>
<feature type="compositionally biased region" description="Basic residues" evidence="1">
    <location>
        <begin position="260"/>
        <end position="271"/>
    </location>
</feature>
<protein>
    <recommendedName>
        <fullName>Putative F-box protein L165</fullName>
    </recommendedName>
</protein>
<organismHost>
    <name type="scientific">Acanthamoeba polyphaga</name>
    <name type="common">Amoeba</name>
    <dbReference type="NCBI Taxonomy" id="5757"/>
</organismHost>